<gene>
    <name evidence="1" type="primary">rpmA</name>
    <name type="ordered locus">BF0929</name>
</gene>
<comment type="similarity">
    <text evidence="1">Belongs to the bacterial ribosomal protein bL27 family.</text>
</comment>
<name>RL27_BACFN</name>
<feature type="chain" id="PRO_1000017413" description="Large ribosomal subunit protein bL27">
    <location>
        <begin position="1"/>
        <end position="89"/>
    </location>
</feature>
<keyword id="KW-0687">Ribonucleoprotein</keyword>
<keyword id="KW-0689">Ribosomal protein</keyword>
<sequence>MAHKKGVGSSKNGRESQSKRLGVKIFGGEACKAGNIIVRQRGTEFHPGENIGMGKDHTLFALVDGTVNFKVGREDRRYVSIIPAEATEA</sequence>
<accession>Q5LGR6</accession>
<dbReference type="EMBL" id="CR626927">
    <property type="protein sequence ID" value="CAH06671.1"/>
    <property type="molecule type" value="Genomic_DNA"/>
</dbReference>
<dbReference type="RefSeq" id="WP_005785336.1">
    <property type="nucleotide sequence ID" value="NZ_UFTH01000001.1"/>
</dbReference>
<dbReference type="SMR" id="Q5LGR6"/>
<dbReference type="PaxDb" id="272559-BF9343_0890"/>
<dbReference type="GeneID" id="60368345"/>
<dbReference type="KEGG" id="bfs:BF9343_0890"/>
<dbReference type="eggNOG" id="COG0211">
    <property type="taxonomic scope" value="Bacteria"/>
</dbReference>
<dbReference type="HOGENOM" id="CLU_095424_4_0_10"/>
<dbReference type="Proteomes" id="UP000006731">
    <property type="component" value="Chromosome"/>
</dbReference>
<dbReference type="GO" id="GO:0022625">
    <property type="term" value="C:cytosolic large ribosomal subunit"/>
    <property type="evidence" value="ECO:0007669"/>
    <property type="project" value="TreeGrafter"/>
</dbReference>
<dbReference type="GO" id="GO:0003735">
    <property type="term" value="F:structural constituent of ribosome"/>
    <property type="evidence" value="ECO:0007669"/>
    <property type="project" value="InterPro"/>
</dbReference>
<dbReference type="GO" id="GO:0006412">
    <property type="term" value="P:translation"/>
    <property type="evidence" value="ECO:0007669"/>
    <property type="project" value="UniProtKB-UniRule"/>
</dbReference>
<dbReference type="FunFam" id="2.40.50.100:FF:000026">
    <property type="entry name" value="50S ribosomal protein L27"/>
    <property type="match status" value="1"/>
</dbReference>
<dbReference type="Gene3D" id="2.40.50.100">
    <property type="match status" value="1"/>
</dbReference>
<dbReference type="HAMAP" id="MF_00539">
    <property type="entry name" value="Ribosomal_bL27"/>
    <property type="match status" value="1"/>
</dbReference>
<dbReference type="InterPro" id="IPR001684">
    <property type="entry name" value="Ribosomal_bL27"/>
</dbReference>
<dbReference type="InterPro" id="IPR018261">
    <property type="entry name" value="Ribosomal_bL27_CS"/>
</dbReference>
<dbReference type="NCBIfam" id="TIGR00062">
    <property type="entry name" value="L27"/>
    <property type="match status" value="1"/>
</dbReference>
<dbReference type="PANTHER" id="PTHR15893:SF0">
    <property type="entry name" value="LARGE RIBOSOMAL SUBUNIT PROTEIN BL27M"/>
    <property type="match status" value="1"/>
</dbReference>
<dbReference type="PANTHER" id="PTHR15893">
    <property type="entry name" value="RIBOSOMAL PROTEIN L27"/>
    <property type="match status" value="1"/>
</dbReference>
<dbReference type="Pfam" id="PF01016">
    <property type="entry name" value="Ribosomal_L27"/>
    <property type="match status" value="1"/>
</dbReference>
<dbReference type="PRINTS" id="PR00063">
    <property type="entry name" value="RIBOSOMALL27"/>
</dbReference>
<dbReference type="SUPFAM" id="SSF110324">
    <property type="entry name" value="Ribosomal L27 protein-like"/>
    <property type="match status" value="1"/>
</dbReference>
<dbReference type="PROSITE" id="PS00831">
    <property type="entry name" value="RIBOSOMAL_L27"/>
    <property type="match status" value="1"/>
</dbReference>
<evidence type="ECO:0000255" key="1">
    <source>
        <dbReference type="HAMAP-Rule" id="MF_00539"/>
    </source>
</evidence>
<evidence type="ECO:0000305" key="2"/>
<proteinExistence type="inferred from homology"/>
<organism>
    <name type="scientific">Bacteroides fragilis (strain ATCC 25285 / DSM 2151 / CCUG 4856 / JCM 11019 / LMG 10263 / NCTC 9343 / Onslow / VPI 2553 / EN-2)</name>
    <dbReference type="NCBI Taxonomy" id="272559"/>
    <lineage>
        <taxon>Bacteria</taxon>
        <taxon>Pseudomonadati</taxon>
        <taxon>Bacteroidota</taxon>
        <taxon>Bacteroidia</taxon>
        <taxon>Bacteroidales</taxon>
        <taxon>Bacteroidaceae</taxon>
        <taxon>Bacteroides</taxon>
    </lineage>
</organism>
<reference key="1">
    <citation type="journal article" date="2005" name="Science">
        <title>Extensive DNA inversions in the B. fragilis genome control variable gene expression.</title>
        <authorList>
            <person name="Cerdeno-Tarraga A.-M."/>
            <person name="Patrick S."/>
            <person name="Crossman L.C."/>
            <person name="Blakely G."/>
            <person name="Abratt V."/>
            <person name="Lennard N."/>
            <person name="Poxton I."/>
            <person name="Duerden B."/>
            <person name="Harris B."/>
            <person name="Quail M.A."/>
            <person name="Barron A."/>
            <person name="Clark L."/>
            <person name="Corton C."/>
            <person name="Doggett J."/>
            <person name="Holden M.T.G."/>
            <person name="Larke N."/>
            <person name="Line A."/>
            <person name="Lord A."/>
            <person name="Norbertczak H."/>
            <person name="Ormond D."/>
            <person name="Price C."/>
            <person name="Rabbinowitsch E."/>
            <person name="Woodward J."/>
            <person name="Barrell B.G."/>
            <person name="Parkhill J."/>
        </authorList>
    </citation>
    <scope>NUCLEOTIDE SEQUENCE [LARGE SCALE GENOMIC DNA]</scope>
    <source>
        <strain>ATCC 25285 / DSM 2151 / CCUG 4856 / JCM 11019 / LMG 10263 / NCTC 9343 / Onslow / VPI 2553 / EN-2</strain>
    </source>
</reference>
<protein>
    <recommendedName>
        <fullName evidence="1">Large ribosomal subunit protein bL27</fullName>
    </recommendedName>
    <alternativeName>
        <fullName evidence="2">50S ribosomal protein L27</fullName>
    </alternativeName>
</protein>